<organism>
    <name type="scientific">Streptococcus pneumoniae (strain CGSP14)</name>
    <dbReference type="NCBI Taxonomy" id="516950"/>
    <lineage>
        <taxon>Bacteria</taxon>
        <taxon>Bacillati</taxon>
        <taxon>Bacillota</taxon>
        <taxon>Bacilli</taxon>
        <taxon>Lactobacillales</taxon>
        <taxon>Streptococcaceae</taxon>
        <taxon>Streptococcus</taxon>
    </lineage>
</organism>
<sequence length="309" mass="34198">MDIQFLGTGAGQPSKARNVSSLALKLLDEINEVWLFDCGEGTQNRILETTIRPRKVSKIFITHLHGDHIFGLPGFLSSRAFQANEEQTDLEIYGPQGIKSFVLTSLRVSGSRLPYRIHFHEFDQDSLGKILETDKFTVYAEELDHTIFCVGYRVMQKDLEGTLDAEKLKAAGVPFGPLFGKIKNGQDLVLEDGTEIKAADYISAPRPGKIITILGDTRKTDASVRLAVNADVLVHESTYGKGDEKIARNHGHSTNMQAAQVAVEAGAKRLLLNHISARFLSKDISKLKKDAATIFENVHVVKDLEEVEI</sequence>
<accession>B2IMY3</accession>
<protein>
    <recommendedName>
        <fullName evidence="1">Ribonuclease Z</fullName>
        <shortName evidence="1">RNase Z</shortName>
        <ecNumber evidence="1">3.1.26.11</ecNumber>
    </recommendedName>
    <alternativeName>
        <fullName evidence="1">tRNA 3 endonuclease</fullName>
    </alternativeName>
    <alternativeName>
        <fullName evidence="1">tRNase Z</fullName>
    </alternativeName>
</protein>
<dbReference type="EC" id="3.1.26.11" evidence="1"/>
<dbReference type="EMBL" id="CP001033">
    <property type="protein sequence ID" value="ACB89883.1"/>
    <property type="molecule type" value="Genomic_DNA"/>
</dbReference>
<dbReference type="RefSeq" id="WP_000354336.1">
    <property type="nucleotide sequence ID" value="NC_010582.1"/>
</dbReference>
<dbReference type="SMR" id="B2IMY3"/>
<dbReference type="GeneID" id="45653932"/>
<dbReference type="KEGG" id="spw:SPCG_0631"/>
<dbReference type="HOGENOM" id="CLU_031317_2_0_9"/>
<dbReference type="GO" id="GO:0042781">
    <property type="term" value="F:3'-tRNA processing endoribonuclease activity"/>
    <property type="evidence" value="ECO:0007669"/>
    <property type="project" value="UniProtKB-UniRule"/>
</dbReference>
<dbReference type="GO" id="GO:0008270">
    <property type="term" value="F:zinc ion binding"/>
    <property type="evidence" value="ECO:0007669"/>
    <property type="project" value="UniProtKB-UniRule"/>
</dbReference>
<dbReference type="CDD" id="cd07717">
    <property type="entry name" value="RNaseZ_ZiPD-like_MBL-fold"/>
    <property type="match status" value="1"/>
</dbReference>
<dbReference type="FunFam" id="3.60.15.10:FF:000002">
    <property type="entry name" value="Ribonuclease Z"/>
    <property type="match status" value="1"/>
</dbReference>
<dbReference type="Gene3D" id="3.60.15.10">
    <property type="entry name" value="Ribonuclease Z/Hydroxyacylglutathione hydrolase-like"/>
    <property type="match status" value="1"/>
</dbReference>
<dbReference type="HAMAP" id="MF_01818">
    <property type="entry name" value="RNase_Z_BN"/>
    <property type="match status" value="1"/>
</dbReference>
<dbReference type="InterPro" id="IPR001279">
    <property type="entry name" value="Metallo-B-lactamas"/>
</dbReference>
<dbReference type="InterPro" id="IPR036866">
    <property type="entry name" value="RibonucZ/Hydroxyglut_hydro"/>
</dbReference>
<dbReference type="InterPro" id="IPR013471">
    <property type="entry name" value="RNase_Z/BN"/>
</dbReference>
<dbReference type="NCBIfam" id="NF000801">
    <property type="entry name" value="PRK00055.1-3"/>
    <property type="match status" value="1"/>
</dbReference>
<dbReference type="NCBIfam" id="TIGR02651">
    <property type="entry name" value="RNase_Z"/>
    <property type="match status" value="1"/>
</dbReference>
<dbReference type="PANTHER" id="PTHR46018">
    <property type="entry name" value="ZINC PHOSPHODIESTERASE ELAC PROTEIN 1"/>
    <property type="match status" value="1"/>
</dbReference>
<dbReference type="PANTHER" id="PTHR46018:SF2">
    <property type="entry name" value="ZINC PHOSPHODIESTERASE ELAC PROTEIN 1"/>
    <property type="match status" value="1"/>
</dbReference>
<dbReference type="Pfam" id="PF00753">
    <property type="entry name" value="Lactamase_B"/>
    <property type="match status" value="1"/>
</dbReference>
<dbReference type="SUPFAM" id="SSF56281">
    <property type="entry name" value="Metallo-hydrolase/oxidoreductase"/>
    <property type="match status" value="1"/>
</dbReference>
<reference key="1">
    <citation type="journal article" date="2009" name="BMC Genomics">
        <title>Genome evolution driven by host adaptations results in a more virulent and antimicrobial-resistant Streptococcus pneumoniae serotype 14.</title>
        <authorList>
            <person name="Ding F."/>
            <person name="Tang P."/>
            <person name="Hsu M.-H."/>
            <person name="Cui P."/>
            <person name="Hu S."/>
            <person name="Yu J."/>
            <person name="Chiu C.-H."/>
        </authorList>
    </citation>
    <scope>NUCLEOTIDE SEQUENCE [LARGE SCALE GENOMIC DNA]</scope>
    <source>
        <strain>CGSP14</strain>
    </source>
</reference>
<evidence type="ECO:0000255" key="1">
    <source>
        <dbReference type="HAMAP-Rule" id="MF_01818"/>
    </source>
</evidence>
<comment type="function">
    <text evidence="1">Zinc phosphodiesterase, which displays some tRNA 3'-processing endonuclease activity. Probably involved in tRNA maturation, by removing a 3'-trailer from precursor tRNA.</text>
</comment>
<comment type="catalytic activity">
    <reaction evidence="1">
        <text>Endonucleolytic cleavage of RNA, removing extra 3' nucleotides from tRNA precursor, generating 3' termini of tRNAs. A 3'-hydroxy group is left at the tRNA terminus and a 5'-phosphoryl group is left at the trailer molecule.</text>
        <dbReference type="EC" id="3.1.26.11"/>
    </reaction>
</comment>
<comment type="cofactor">
    <cofactor evidence="1">
        <name>Zn(2+)</name>
        <dbReference type="ChEBI" id="CHEBI:29105"/>
    </cofactor>
    <text evidence="1">Binds 2 Zn(2+) ions.</text>
</comment>
<comment type="subunit">
    <text evidence="1">Homodimer.</text>
</comment>
<comment type="similarity">
    <text evidence="1">Belongs to the RNase Z family.</text>
</comment>
<name>RNZ_STRPS</name>
<keyword id="KW-0255">Endonuclease</keyword>
<keyword id="KW-0378">Hydrolase</keyword>
<keyword id="KW-0479">Metal-binding</keyword>
<keyword id="KW-0540">Nuclease</keyword>
<keyword id="KW-0819">tRNA processing</keyword>
<keyword id="KW-0862">Zinc</keyword>
<feature type="chain" id="PRO_1000216012" description="Ribonuclease Z">
    <location>
        <begin position="1"/>
        <end position="309"/>
    </location>
</feature>
<feature type="active site" description="Proton acceptor" evidence="1">
    <location>
        <position position="67"/>
    </location>
</feature>
<feature type="binding site" evidence="1">
    <location>
        <position position="63"/>
    </location>
    <ligand>
        <name>Zn(2+)</name>
        <dbReference type="ChEBI" id="CHEBI:29105"/>
        <label>1</label>
        <note>catalytic</note>
    </ligand>
</feature>
<feature type="binding site" evidence="1">
    <location>
        <position position="65"/>
    </location>
    <ligand>
        <name>Zn(2+)</name>
        <dbReference type="ChEBI" id="CHEBI:29105"/>
        <label>1</label>
        <note>catalytic</note>
    </ligand>
</feature>
<feature type="binding site" evidence="1">
    <location>
        <position position="67"/>
    </location>
    <ligand>
        <name>Zn(2+)</name>
        <dbReference type="ChEBI" id="CHEBI:29105"/>
        <label>2</label>
        <note>catalytic</note>
    </ligand>
</feature>
<feature type="binding site" evidence="1">
    <location>
        <position position="68"/>
    </location>
    <ligand>
        <name>Zn(2+)</name>
        <dbReference type="ChEBI" id="CHEBI:29105"/>
        <label>2</label>
        <note>catalytic</note>
    </ligand>
</feature>
<feature type="binding site" evidence="1">
    <location>
        <position position="145"/>
    </location>
    <ligand>
        <name>Zn(2+)</name>
        <dbReference type="ChEBI" id="CHEBI:29105"/>
        <label>1</label>
        <note>catalytic</note>
    </ligand>
</feature>
<feature type="binding site" evidence="1">
    <location>
        <position position="216"/>
    </location>
    <ligand>
        <name>Zn(2+)</name>
        <dbReference type="ChEBI" id="CHEBI:29105"/>
        <label>1</label>
        <note>catalytic</note>
    </ligand>
</feature>
<feature type="binding site" evidence="1">
    <location>
        <position position="216"/>
    </location>
    <ligand>
        <name>Zn(2+)</name>
        <dbReference type="ChEBI" id="CHEBI:29105"/>
        <label>2</label>
        <note>catalytic</note>
    </ligand>
</feature>
<feature type="binding site" evidence="1">
    <location>
        <position position="274"/>
    </location>
    <ligand>
        <name>Zn(2+)</name>
        <dbReference type="ChEBI" id="CHEBI:29105"/>
        <label>2</label>
        <note>catalytic</note>
    </ligand>
</feature>
<proteinExistence type="inferred from homology"/>
<gene>
    <name evidence="1" type="primary">rnz</name>
    <name type="ordered locus">SPCG_0631</name>
</gene>